<comment type="function">
    <text evidence="1">Reversibly transfers an adenylyl group from ATP to 4'-phosphopantetheine, yielding dephospho-CoA (dPCoA) and pyrophosphate.</text>
</comment>
<comment type="catalytic activity">
    <reaction evidence="1">
        <text>(R)-4'-phosphopantetheine + ATP + H(+) = 3'-dephospho-CoA + diphosphate</text>
        <dbReference type="Rhea" id="RHEA:19801"/>
        <dbReference type="ChEBI" id="CHEBI:15378"/>
        <dbReference type="ChEBI" id="CHEBI:30616"/>
        <dbReference type="ChEBI" id="CHEBI:33019"/>
        <dbReference type="ChEBI" id="CHEBI:57328"/>
        <dbReference type="ChEBI" id="CHEBI:61723"/>
        <dbReference type="EC" id="2.7.7.3"/>
    </reaction>
</comment>
<comment type="cofactor">
    <cofactor evidence="1">
        <name>Mg(2+)</name>
        <dbReference type="ChEBI" id="CHEBI:18420"/>
    </cofactor>
</comment>
<comment type="pathway">
    <text evidence="1">Cofactor biosynthesis; coenzyme A biosynthesis; CoA from (R)-pantothenate: step 4/5.</text>
</comment>
<comment type="subunit">
    <text evidence="1">Homohexamer.</text>
</comment>
<comment type="subcellular location">
    <subcellularLocation>
        <location evidence="1">Cytoplasm</location>
    </subcellularLocation>
</comment>
<comment type="similarity">
    <text evidence="1">Belongs to the bacterial CoaD family.</text>
</comment>
<evidence type="ECO:0000255" key="1">
    <source>
        <dbReference type="HAMAP-Rule" id="MF_00151"/>
    </source>
</evidence>
<protein>
    <recommendedName>
        <fullName evidence="1">Phosphopantetheine adenylyltransferase</fullName>
        <ecNumber evidence="1">2.7.7.3</ecNumber>
    </recommendedName>
    <alternativeName>
        <fullName evidence="1">Dephospho-CoA pyrophosphorylase</fullName>
    </alternativeName>
    <alternativeName>
        <fullName evidence="1">Pantetheine-phosphate adenylyltransferase</fullName>
        <shortName evidence="1">PPAT</shortName>
    </alternativeName>
</protein>
<accession>A0M4U6</accession>
<keyword id="KW-0067">ATP-binding</keyword>
<keyword id="KW-0173">Coenzyme A biosynthesis</keyword>
<keyword id="KW-0963">Cytoplasm</keyword>
<keyword id="KW-0460">Magnesium</keyword>
<keyword id="KW-0547">Nucleotide-binding</keyword>
<keyword id="KW-0548">Nucleotidyltransferase</keyword>
<keyword id="KW-0808">Transferase</keyword>
<feature type="chain" id="PRO_1000076769" description="Phosphopantetheine adenylyltransferase">
    <location>
        <begin position="1"/>
        <end position="151"/>
    </location>
</feature>
<feature type="binding site" evidence="1">
    <location>
        <begin position="9"/>
        <end position="10"/>
    </location>
    <ligand>
        <name>ATP</name>
        <dbReference type="ChEBI" id="CHEBI:30616"/>
    </ligand>
</feature>
<feature type="binding site" evidence="1">
    <location>
        <position position="9"/>
    </location>
    <ligand>
        <name>substrate</name>
    </ligand>
</feature>
<feature type="binding site" evidence="1">
    <location>
        <position position="17"/>
    </location>
    <ligand>
        <name>ATP</name>
        <dbReference type="ChEBI" id="CHEBI:30616"/>
    </ligand>
</feature>
<feature type="binding site" evidence="1">
    <location>
        <position position="41"/>
    </location>
    <ligand>
        <name>substrate</name>
    </ligand>
</feature>
<feature type="binding site" evidence="1">
    <location>
        <position position="73"/>
    </location>
    <ligand>
        <name>substrate</name>
    </ligand>
</feature>
<feature type="binding site" evidence="1">
    <location>
        <position position="87"/>
    </location>
    <ligand>
        <name>substrate</name>
    </ligand>
</feature>
<feature type="binding site" evidence="1">
    <location>
        <begin position="88"/>
        <end position="90"/>
    </location>
    <ligand>
        <name>ATP</name>
        <dbReference type="ChEBI" id="CHEBI:30616"/>
    </ligand>
</feature>
<feature type="binding site" evidence="1">
    <location>
        <position position="98"/>
    </location>
    <ligand>
        <name>ATP</name>
        <dbReference type="ChEBI" id="CHEBI:30616"/>
    </ligand>
</feature>
<feature type="binding site" evidence="1">
    <location>
        <begin position="122"/>
        <end position="128"/>
    </location>
    <ligand>
        <name>ATP</name>
        <dbReference type="ChEBI" id="CHEBI:30616"/>
    </ligand>
</feature>
<feature type="site" description="Transition state stabilizer" evidence="1">
    <location>
        <position position="17"/>
    </location>
</feature>
<name>COAD_CHRFK</name>
<sequence>MKKAVFPGSFDPLTLGHTDIIDRALPLFDEIILAIGTNSSKKYMFSLEDRLHFLKETYKNESKVKVETYKGLTVDFCKSQNAGFILRGLRNGQDLEFEKSIGQTNYKMSGIDSIFLLSSSGKAHISSTVVRDVMHHGGNYEFMVPDVVRKK</sequence>
<proteinExistence type="inferred from homology"/>
<dbReference type="EC" id="2.7.7.3" evidence="1"/>
<dbReference type="EMBL" id="CU207366">
    <property type="protein sequence ID" value="CAL67641.1"/>
    <property type="molecule type" value="Genomic_DNA"/>
</dbReference>
<dbReference type="RefSeq" id="WP_011710544.1">
    <property type="nucleotide sequence ID" value="NC_008571.1"/>
</dbReference>
<dbReference type="SMR" id="A0M4U6"/>
<dbReference type="STRING" id="411154.GFO_2685"/>
<dbReference type="KEGG" id="gfo:GFO_2685"/>
<dbReference type="eggNOG" id="COG0669">
    <property type="taxonomic scope" value="Bacteria"/>
</dbReference>
<dbReference type="HOGENOM" id="CLU_100149_1_1_10"/>
<dbReference type="OrthoDB" id="9806661at2"/>
<dbReference type="UniPathway" id="UPA00241">
    <property type="reaction ID" value="UER00355"/>
</dbReference>
<dbReference type="Proteomes" id="UP000000755">
    <property type="component" value="Chromosome"/>
</dbReference>
<dbReference type="GO" id="GO:0005737">
    <property type="term" value="C:cytoplasm"/>
    <property type="evidence" value="ECO:0007669"/>
    <property type="project" value="UniProtKB-SubCell"/>
</dbReference>
<dbReference type="GO" id="GO:0005524">
    <property type="term" value="F:ATP binding"/>
    <property type="evidence" value="ECO:0007669"/>
    <property type="project" value="UniProtKB-KW"/>
</dbReference>
<dbReference type="GO" id="GO:0004595">
    <property type="term" value="F:pantetheine-phosphate adenylyltransferase activity"/>
    <property type="evidence" value="ECO:0007669"/>
    <property type="project" value="UniProtKB-UniRule"/>
</dbReference>
<dbReference type="GO" id="GO:0015937">
    <property type="term" value="P:coenzyme A biosynthetic process"/>
    <property type="evidence" value="ECO:0007669"/>
    <property type="project" value="UniProtKB-UniRule"/>
</dbReference>
<dbReference type="Gene3D" id="3.40.50.620">
    <property type="entry name" value="HUPs"/>
    <property type="match status" value="1"/>
</dbReference>
<dbReference type="HAMAP" id="MF_00151">
    <property type="entry name" value="PPAT_bact"/>
    <property type="match status" value="1"/>
</dbReference>
<dbReference type="InterPro" id="IPR004821">
    <property type="entry name" value="Cyt_trans-like"/>
</dbReference>
<dbReference type="InterPro" id="IPR001980">
    <property type="entry name" value="PPAT"/>
</dbReference>
<dbReference type="InterPro" id="IPR014729">
    <property type="entry name" value="Rossmann-like_a/b/a_fold"/>
</dbReference>
<dbReference type="NCBIfam" id="TIGR01510">
    <property type="entry name" value="coaD_prev_kdtB"/>
    <property type="match status" value="1"/>
</dbReference>
<dbReference type="NCBIfam" id="TIGR00125">
    <property type="entry name" value="cyt_tran_rel"/>
    <property type="match status" value="1"/>
</dbReference>
<dbReference type="PANTHER" id="PTHR21342">
    <property type="entry name" value="PHOSPHOPANTETHEINE ADENYLYLTRANSFERASE"/>
    <property type="match status" value="1"/>
</dbReference>
<dbReference type="PANTHER" id="PTHR21342:SF1">
    <property type="entry name" value="PHOSPHOPANTETHEINE ADENYLYLTRANSFERASE"/>
    <property type="match status" value="1"/>
</dbReference>
<dbReference type="Pfam" id="PF01467">
    <property type="entry name" value="CTP_transf_like"/>
    <property type="match status" value="1"/>
</dbReference>
<dbReference type="PRINTS" id="PR01020">
    <property type="entry name" value="LPSBIOSNTHSS"/>
</dbReference>
<dbReference type="SUPFAM" id="SSF52374">
    <property type="entry name" value="Nucleotidylyl transferase"/>
    <property type="match status" value="1"/>
</dbReference>
<organism>
    <name type="scientific">Christiangramia forsetii (strain DSM 17595 / CGMCC 1.15422 / KT0803)</name>
    <name type="common">Gramella forsetii</name>
    <dbReference type="NCBI Taxonomy" id="411154"/>
    <lineage>
        <taxon>Bacteria</taxon>
        <taxon>Pseudomonadati</taxon>
        <taxon>Bacteroidota</taxon>
        <taxon>Flavobacteriia</taxon>
        <taxon>Flavobacteriales</taxon>
        <taxon>Flavobacteriaceae</taxon>
        <taxon>Christiangramia</taxon>
    </lineage>
</organism>
<reference key="1">
    <citation type="journal article" date="2006" name="Environ. Microbiol.">
        <title>Whole genome analysis of the marine Bacteroidetes'Gramella forsetii' reveals adaptations to degradation of polymeric organic matter.</title>
        <authorList>
            <person name="Bauer M."/>
            <person name="Kube M."/>
            <person name="Teeling H."/>
            <person name="Richter M."/>
            <person name="Lombardot T."/>
            <person name="Allers E."/>
            <person name="Wuerdemann C.A."/>
            <person name="Quast C."/>
            <person name="Kuhl H."/>
            <person name="Knaust F."/>
            <person name="Woebken D."/>
            <person name="Bischof K."/>
            <person name="Mussmann M."/>
            <person name="Choudhuri J.V."/>
            <person name="Meyer F."/>
            <person name="Reinhardt R."/>
            <person name="Amann R.I."/>
            <person name="Gloeckner F.O."/>
        </authorList>
    </citation>
    <scope>NUCLEOTIDE SEQUENCE [LARGE SCALE GENOMIC DNA]</scope>
    <source>
        <strain>DSM 17595 / CGMCC 1.15422 / KT0803</strain>
    </source>
</reference>
<gene>
    <name evidence="1" type="primary">coaD</name>
    <name type="ordered locus">GFO_2685</name>
</gene>